<organismHost>
    <name type="scientific">Enterobacteriaceae</name>
    <dbReference type="NCBI Taxonomy" id="543"/>
</organismHost>
<feature type="chain" id="PRO_0000149721" description="Repressor protein C">
    <location>
        <begin position="1"/>
        <end position="99"/>
    </location>
</feature>
<feature type="domain" description="HTH cro/C1-type" evidence="1">
    <location>
        <begin position="9"/>
        <end position="63"/>
    </location>
</feature>
<feature type="DNA-binding region" description="H-T-H motif" evidence="1">
    <location>
        <begin position="20"/>
        <end position="39"/>
    </location>
</feature>
<feature type="helix" evidence="2">
    <location>
        <begin position="7"/>
        <end position="15"/>
    </location>
</feature>
<feature type="helix" evidence="2">
    <location>
        <begin position="20"/>
        <end position="27"/>
    </location>
</feature>
<feature type="helix" evidence="2">
    <location>
        <begin position="31"/>
        <end position="37"/>
    </location>
</feature>
<feature type="turn" evidence="2">
    <location>
        <begin position="38"/>
        <end position="40"/>
    </location>
</feature>
<feature type="helix" evidence="2">
    <location>
        <begin position="46"/>
        <end position="53"/>
    </location>
</feature>
<feature type="strand" evidence="2">
    <location>
        <begin position="54"/>
        <end position="63"/>
    </location>
</feature>
<feature type="turn" evidence="2">
    <location>
        <begin position="64"/>
        <end position="66"/>
    </location>
</feature>
<feature type="turn" evidence="2">
    <location>
        <begin position="72"/>
        <end position="75"/>
    </location>
</feature>
<name>RPC_BPP2</name>
<reference key="1">
    <citation type="journal article" date="1984" name="Proc. Natl. Acad. Sci. U.S.A.">
        <title>DNA sequences of the repressor gene and operator region of bacteriophage P2.</title>
        <authorList>
            <person name="Ljungquist E."/>
            <person name="Kockum K."/>
            <person name="Bertani L.E."/>
        </authorList>
    </citation>
    <scope>NUCLEOTIDE SEQUENCE [GENOMIC DNA]</scope>
</reference>
<reference key="2">
    <citation type="submission" date="1998-05" db="EMBL/GenBank/DDBJ databases">
        <title>The complete genome of bacteriophage P2.</title>
        <authorList>
            <person name="Christie G.E."/>
            <person name="Haggard-Ljungquist E."/>
            <person name="Calendar R."/>
        </authorList>
    </citation>
    <scope>SEQUENCE REVISION TO 74</scope>
</reference>
<reference key="3">
    <citation type="journal article" date="1987" name="Mol. Gen. Genet.">
        <title>DNA sequences of bacteriophage P2 early genes cox and B and their regulatory sites.</title>
        <authorList>
            <person name="Haggaard-Ljungquist E."/>
            <person name="Kockum K."/>
            <person name="Bertani L.E."/>
        </authorList>
    </citation>
    <scope>NUCLEOTIDE SEQUENCE [GENOMIC DNA] OF 1-14</scope>
</reference>
<gene>
    <name type="primary">C</name>
</gene>
<organism>
    <name type="scientific">Escherichia phage P2</name>
    <name type="common">Bacteriophage P2</name>
    <dbReference type="NCBI Taxonomy" id="2905681"/>
    <lineage>
        <taxon>Viruses</taxon>
        <taxon>Duplodnaviria</taxon>
        <taxon>Heunggongvirae</taxon>
        <taxon>Uroviricota</taxon>
        <taxon>Caudoviricetes</taxon>
        <taxon>Peduoviridae</taxon>
        <taxon>Peduovirus</taxon>
        <taxon>Peduovirus P2</taxon>
    </lineage>
</organism>
<keyword id="KW-0002">3D-structure</keyword>
<keyword id="KW-0238">DNA-binding</keyword>
<keyword id="KW-1185">Reference proteome</keyword>
<keyword id="KW-0678">Repressor</keyword>
<keyword id="KW-0804">Transcription</keyword>
<keyword id="KW-0805">Transcription regulation</keyword>
<accession>P04132</accession>
<dbReference type="EMBL" id="AF063097">
    <property type="protein sequence ID" value="AAD03298.1"/>
    <property type="molecule type" value="Genomic_DNA"/>
</dbReference>
<dbReference type="PIR" id="A05127">
    <property type="entry name" value="WPBPP2"/>
</dbReference>
<dbReference type="RefSeq" id="NP_046787.1">
    <property type="nucleotide sequence ID" value="NC_001895.1"/>
</dbReference>
<dbReference type="PDB" id="2L49">
    <property type="method" value="NMR"/>
    <property type="chains" value="A/B=1-99"/>
</dbReference>
<dbReference type="PDBsum" id="2L49"/>
<dbReference type="BMRB" id="P04132"/>
<dbReference type="SMR" id="P04132"/>
<dbReference type="GeneID" id="77440806"/>
<dbReference type="KEGG" id="vg:77440806"/>
<dbReference type="EvolutionaryTrace" id="P04132"/>
<dbReference type="Proteomes" id="UP000009092">
    <property type="component" value="Genome"/>
</dbReference>
<dbReference type="GO" id="GO:0003677">
    <property type="term" value="F:DNA binding"/>
    <property type="evidence" value="ECO:0007669"/>
    <property type="project" value="UniProtKB-KW"/>
</dbReference>
<dbReference type="CDD" id="cd00093">
    <property type="entry name" value="HTH_XRE"/>
    <property type="match status" value="1"/>
</dbReference>
<dbReference type="Gene3D" id="1.10.260.40">
    <property type="entry name" value="lambda repressor-like DNA-binding domains"/>
    <property type="match status" value="1"/>
</dbReference>
<dbReference type="InterPro" id="IPR001387">
    <property type="entry name" value="Cro/C1-type_HTH"/>
</dbReference>
<dbReference type="InterPro" id="IPR010982">
    <property type="entry name" value="Lambda_DNA-bd_dom_sf"/>
</dbReference>
<dbReference type="Pfam" id="PF01381">
    <property type="entry name" value="HTH_3"/>
    <property type="match status" value="1"/>
</dbReference>
<dbReference type="SMART" id="SM00530">
    <property type="entry name" value="HTH_XRE"/>
    <property type="match status" value="1"/>
</dbReference>
<dbReference type="SUPFAM" id="SSF47413">
    <property type="entry name" value="lambda repressor-like DNA-binding domains"/>
    <property type="match status" value="1"/>
</dbReference>
<dbReference type="PROSITE" id="PS50943">
    <property type="entry name" value="HTH_CROC1"/>
    <property type="match status" value="1"/>
</dbReference>
<proteinExistence type="evidence at protein level"/>
<protein>
    <recommendedName>
        <fullName>Repressor protein C</fullName>
    </recommendedName>
</protein>
<evidence type="ECO:0000255" key="1">
    <source>
        <dbReference type="PROSITE-ProRule" id="PRU00257"/>
    </source>
</evidence>
<evidence type="ECO:0007829" key="2">
    <source>
        <dbReference type="PDB" id="2L49"/>
    </source>
</evidence>
<sequence length="99" mass="11078">MSNTISEKIVLMRKSEYLSRQQLADLTGVPYGTLSYYESGRSTPPTDVMMNILQTPQFTKYTLWFMTNQIAPEFGQIAPALAHFGQNETTSPHSGQKTG</sequence>